<proteinExistence type="inferred from homology"/>
<gene>
    <name evidence="1" type="primary">pyrG</name>
    <name type="ordered locus">HDEF_0765</name>
</gene>
<sequence>MITNYIFVTGGVVSSLGKGIAAASLAAILEARSLKVTIMKLDPYINLDPGTISPKQHGEVFVTEDGAETDLDLGHYERFIRTKMTRHNNFTTGAIYSEVLQKERRGDYLGSTVQVIPHITNAIKERIVIAAQGYDVALVEIGGTVGDIESLPFLEAIRQMVTDVGRSHALYIHLTLLPYLTTAGEVKTKPTQHSVKELLSIGIQPDVLICRSDHEVPDHERSKIALFCNVEKKAVISLKDVDSIYKIPKILQSQGLDQYICDKFNLKCPKANLGQWEQVLYEECHCEGTVSIGMVGKYIELPDAYKSVIEALKHAGLKNRVKVNIQLIDAQELLTVGIEKLAGLNAILIPGGFGHRGIEGMIVAAQYARENRIPYLGICLGMQVALIEFARHVAGMEKANSTEFDPDARYPVIGLITEWQNEDGEIAVRSEKSNLGGTMRVGAQKCHLVKGSLTHQLYEKPIIIERHRHRYEVNNMILPIIEAAGLSVSGRSMDKKLVEIIELPHHPWFVACQFHPEFTSTPRDGHPLFIGFVKSALAHHQDSLK</sequence>
<protein>
    <recommendedName>
        <fullName evidence="1">CTP synthase</fullName>
        <ecNumber evidence="1">6.3.4.2</ecNumber>
    </recommendedName>
    <alternativeName>
        <fullName evidence="1">Cytidine 5'-triphosphate synthase</fullName>
    </alternativeName>
    <alternativeName>
        <fullName evidence="1">Cytidine triphosphate synthetase</fullName>
        <shortName evidence="1">CTP synthetase</shortName>
        <shortName evidence="1">CTPS</shortName>
    </alternativeName>
    <alternativeName>
        <fullName evidence="1">UTP--ammonia ligase</fullName>
    </alternativeName>
</protein>
<feature type="chain" id="PRO_1000214013" description="CTP synthase">
    <location>
        <begin position="1"/>
        <end position="545"/>
    </location>
</feature>
<feature type="domain" description="Glutamine amidotransferase type-1" evidence="1">
    <location>
        <begin position="291"/>
        <end position="542"/>
    </location>
</feature>
<feature type="region of interest" description="Amidoligase domain" evidence="1">
    <location>
        <begin position="1"/>
        <end position="266"/>
    </location>
</feature>
<feature type="active site" description="Nucleophile; for glutamine hydrolysis" evidence="1">
    <location>
        <position position="379"/>
    </location>
</feature>
<feature type="active site" evidence="1">
    <location>
        <position position="515"/>
    </location>
</feature>
<feature type="active site" evidence="1">
    <location>
        <position position="517"/>
    </location>
</feature>
<feature type="binding site" evidence="1">
    <location>
        <position position="14"/>
    </location>
    <ligand>
        <name>CTP</name>
        <dbReference type="ChEBI" id="CHEBI:37563"/>
        <note>allosteric inhibitor</note>
    </ligand>
</feature>
<feature type="binding site" evidence="1">
    <location>
        <position position="14"/>
    </location>
    <ligand>
        <name>UTP</name>
        <dbReference type="ChEBI" id="CHEBI:46398"/>
    </ligand>
</feature>
<feature type="binding site" evidence="1">
    <location>
        <begin position="15"/>
        <end position="20"/>
    </location>
    <ligand>
        <name>ATP</name>
        <dbReference type="ChEBI" id="CHEBI:30616"/>
    </ligand>
</feature>
<feature type="binding site" evidence="1">
    <location>
        <position position="72"/>
    </location>
    <ligand>
        <name>ATP</name>
        <dbReference type="ChEBI" id="CHEBI:30616"/>
    </ligand>
</feature>
<feature type="binding site" evidence="1">
    <location>
        <position position="72"/>
    </location>
    <ligand>
        <name>Mg(2+)</name>
        <dbReference type="ChEBI" id="CHEBI:18420"/>
    </ligand>
</feature>
<feature type="binding site" evidence="1">
    <location>
        <position position="140"/>
    </location>
    <ligand>
        <name>Mg(2+)</name>
        <dbReference type="ChEBI" id="CHEBI:18420"/>
    </ligand>
</feature>
<feature type="binding site" evidence="1">
    <location>
        <begin position="147"/>
        <end position="149"/>
    </location>
    <ligand>
        <name>CTP</name>
        <dbReference type="ChEBI" id="CHEBI:37563"/>
        <note>allosteric inhibitor</note>
    </ligand>
</feature>
<feature type="binding site" evidence="1">
    <location>
        <begin position="187"/>
        <end position="192"/>
    </location>
    <ligand>
        <name>CTP</name>
        <dbReference type="ChEBI" id="CHEBI:37563"/>
        <note>allosteric inhibitor</note>
    </ligand>
</feature>
<feature type="binding site" evidence="1">
    <location>
        <begin position="187"/>
        <end position="192"/>
    </location>
    <ligand>
        <name>UTP</name>
        <dbReference type="ChEBI" id="CHEBI:46398"/>
    </ligand>
</feature>
<feature type="binding site" evidence="1">
    <location>
        <position position="223"/>
    </location>
    <ligand>
        <name>CTP</name>
        <dbReference type="ChEBI" id="CHEBI:37563"/>
        <note>allosteric inhibitor</note>
    </ligand>
</feature>
<feature type="binding site" evidence="1">
    <location>
        <position position="223"/>
    </location>
    <ligand>
        <name>UTP</name>
        <dbReference type="ChEBI" id="CHEBI:46398"/>
    </ligand>
</feature>
<feature type="binding site" evidence="1">
    <location>
        <begin position="239"/>
        <end position="241"/>
    </location>
    <ligand>
        <name>ATP</name>
        <dbReference type="ChEBI" id="CHEBI:30616"/>
    </ligand>
</feature>
<feature type="binding site" evidence="1">
    <location>
        <position position="352"/>
    </location>
    <ligand>
        <name>L-glutamine</name>
        <dbReference type="ChEBI" id="CHEBI:58359"/>
    </ligand>
</feature>
<feature type="binding site" evidence="1">
    <location>
        <begin position="380"/>
        <end position="383"/>
    </location>
    <ligand>
        <name>L-glutamine</name>
        <dbReference type="ChEBI" id="CHEBI:58359"/>
    </ligand>
</feature>
<feature type="binding site" evidence="1">
    <location>
        <position position="403"/>
    </location>
    <ligand>
        <name>L-glutamine</name>
        <dbReference type="ChEBI" id="CHEBI:58359"/>
    </ligand>
</feature>
<feature type="binding site" evidence="1">
    <location>
        <position position="470"/>
    </location>
    <ligand>
        <name>L-glutamine</name>
        <dbReference type="ChEBI" id="CHEBI:58359"/>
    </ligand>
</feature>
<accession>C4K4K0</accession>
<comment type="function">
    <text evidence="1">Catalyzes the ATP-dependent amination of UTP to CTP with either L-glutamine or ammonia as the source of nitrogen. Regulates intracellular CTP levels through interactions with the four ribonucleotide triphosphates.</text>
</comment>
<comment type="catalytic activity">
    <reaction evidence="1">
        <text>UTP + L-glutamine + ATP + H2O = CTP + L-glutamate + ADP + phosphate + 2 H(+)</text>
        <dbReference type="Rhea" id="RHEA:26426"/>
        <dbReference type="ChEBI" id="CHEBI:15377"/>
        <dbReference type="ChEBI" id="CHEBI:15378"/>
        <dbReference type="ChEBI" id="CHEBI:29985"/>
        <dbReference type="ChEBI" id="CHEBI:30616"/>
        <dbReference type="ChEBI" id="CHEBI:37563"/>
        <dbReference type="ChEBI" id="CHEBI:43474"/>
        <dbReference type="ChEBI" id="CHEBI:46398"/>
        <dbReference type="ChEBI" id="CHEBI:58359"/>
        <dbReference type="ChEBI" id="CHEBI:456216"/>
        <dbReference type="EC" id="6.3.4.2"/>
    </reaction>
</comment>
<comment type="catalytic activity">
    <reaction evidence="1">
        <text>L-glutamine + H2O = L-glutamate + NH4(+)</text>
        <dbReference type="Rhea" id="RHEA:15889"/>
        <dbReference type="ChEBI" id="CHEBI:15377"/>
        <dbReference type="ChEBI" id="CHEBI:28938"/>
        <dbReference type="ChEBI" id="CHEBI:29985"/>
        <dbReference type="ChEBI" id="CHEBI:58359"/>
    </reaction>
</comment>
<comment type="catalytic activity">
    <reaction evidence="1">
        <text>UTP + NH4(+) + ATP = CTP + ADP + phosphate + 2 H(+)</text>
        <dbReference type="Rhea" id="RHEA:16597"/>
        <dbReference type="ChEBI" id="CHEBI:15378"/>
        <dbReference type="ChEBI" id="CHEBI:28938"/>
        <dbReference type="ChEBI" id="CHEBI:30616"/>
        <dbReference type="ChEBI" id="CHEBI:37563"/>
        <dbReference type="ChEBI" id="CHEBI:43474"/>
        <dbReference type="ChEBI" id="CHEBI:46398"/>
        <dbReference type="ChEBI" id="CHEBI:456216"/>
    </reaction>
</comment>
<comment type="activity regulation">
    <text evidence="1">Allosterically activated by GTP, when glutamine is the substrate; GTP has no effect on the reaction when ammonia is the substrate. The allosteric effector GTP functions by stabilizing the protein conformation that binds the tetrahedral intermediate(s) formed during glutamine hydrolysis. Inhibited by the product CTP, via allosteric rather than competitive inhibition.</text>
</comment>
<comment type="pathway">
    <text evidence="1">Pyrimidine metabolism; CTP biosynthesis via de novo pathway; CTP from UDP: step 2/2.</text>
</comment>
<comment type="subunit">
    <text evidence="1">Homotetramer.</text>
</comment>
<comment type="miscellaneous">
    <text evidence="1">CTPSs have evolved a hybrid strategy for distinguishing between UTP and CTP. The overlapping regions of the product feedback inhibitory and substrate sites recognize a common feature in both compounds, the triphosphate moiety. To differentiate isosteric substrate and product pyrimidine rings, an additional pocket far from the expected kinase/ligase catalytic site, specifically recognizes the cytosine and ribose portions of the product inhibitor.</text>
</comment>
<comment type="similarity">
    <text evidence="1">Belongs to the CTP synthase family.</text>
</comment>
<name>PYRG_HAMD5</name>
<organism>
    <name type="scientific">Hamiltonella defensa subsp. Acyrthosiphon pisum (strain 5AT)</name>
    <dbReference type="NCBI Taxonomy" id="572265"/>
    <lineage>
        <taxon>Bacteria</taxon>
        <taxon>Pseudomonadati</taxon>
        <taxon>Pseudomonadota</taxon>
        <taxon>Gammaproteobacteria</taxon>
        <taxon>Enterobacterales</taxon>
        <taxon>Enterobacteriaceae</taxon>
        <taxon>aphid secondary symbionts</taxon>
        <taxon>Candidatus Hamiltonella</taxon>
    </lineage>
</organism>
<reference key="1">
    <citation type="journal article" date="2009" name="Proc. Natl. Acad. Sci. U.S.A.">
        <title>Hamiltonella defensa, genome evolution of protective bacterial endosymbiont from pathogenic ancestors.</title>
        <authorList>
            <person name="Degnan P.H."/>
            <person name="Yu Y."/>
            <person name="Sisneros N."/>
            <person name="Wing R.A."/>
            <person name="Moran N.A."/>
        </authorList>
    </citation>
    <scope>NUCLEOTIDE SEQUENCE [LARGE SCALE GENOMIC DNA]</scope>
    <source>
        <strain>5AT</strain>
    </source>
</reference>
<keyword id="KW-0067">ATP-binding</keyword>
<keyword id="KW-0315">Glutamine amidotransferase</keyword>
<keyword id="KW-0436">Ligase</keyword>
<keyword id="KW-0460">Magnesium</keyword>
<keyword id="KW-0479">Metal-binding</keyword>
<keyword id="KW-0547">Nucleotide-binding</keyword>
<keyword id="KW-0665">Pyrimidine biosynthesis</keyword>
<evidence type="ECO:0000255" key="1">
    <source>
        <dbReference type="HAMAP-Rule" id="MF_01227"/>
    </source>
</evidence>
<dbReference type="EC" id="6.3.4.2" evidence="1"/>
<dbReference type="EMBL" id="CP001277">
    <property type="protein sequence ID" value="ACQ67493.1"/>
    <property type="molecule type" value="Genomic_DNA"/>
</dbReference>
<dbReference type="RefSeq" id="WP_015873313.1">
    <property type="nucleotide sequence ID" value="NC_012751.1"/>
</dbReference>
<dbReference type="SMR" id="C4K4K0"/>
<dbReference type="STRING" id="572265.HDEF_0765"/>
<dbReference type="GeneID" id="66260607"/>
<dbReference type="KEGG" id="hde:HDEF_0765"/>
<dbReference type="eggNOG" id="COG0504">
    <property type="taxonomic scope" value="Bacteria"/>
</dbReference>
<dbReference type="HOGENOM" id="CLU_011675_5_0_6"/>
<dbReference type="UniPathway" id="UPA00159">
    <property type="reaction ID" value="UER00277"/>
</dbReference>
<dbReference type="Proteomes" id="UP000002334">
    <property type="component" value="Chromosome"/>
</dbReference>
<dbReference type="GO" id="GO:0005829">
    <property type="term" value="C:cytosol"/>
    <property type="evidence" value="ECO:0007669"/>
    <property type="project" value="TreeGrafter"/>
</dbReference>
<dbReference type="GO" id="GO:0005524">
    <property type="term" value="F:ATP binding"/>
    <property type="evidence" value="ECO:0007669"/>
    <property type="project" value="UniProtKB-KW"/>
</dbReference>
<dbReference type="GO" id="GO:0003883">
    <property type="term" value="F:CTP synthase activity"/>
    <property type="evidence" value="ECO:0007669"/>
    <property type="project" value="UniProtKB-UniRule"/>
</dbReference>
<dbReference type="GO" id="GO:0004359">
    <property type="term" value="F:glutaminase activity"/>
    <property type="evidence" value="ECO:0007669"/>
    <property type="project" value="RHEA"/>
</dbReference>
<dbReference type="GO" id="GO:0042802">
    <property type="term" value="F:identical protein binding"/>
    <property type="evidence" value="ECO:0007669"/>
    <property type="project" value="TreeGrafter"/>
</dbReference>
<dbReference type="GO" id="GO:0046872">
    <property type="term" value="F:metal ion binding"/>
    <property type="evidence" value="ECO:0007669"/>
    <property type="project" value="UniProtKB-KW"/>
</dbReference>
<dbReference type="GO" id="GO:0044210">
    <property type="term" value="P:'de novo' CTP biosynthetic process"/>
    <property type="evidence" value="ECO:0007669"/>
    <property type="project" value="UniProtKB-UniRule"/>
</dbReference>
<dbReference type="GO" id="GO:0019856">
    <property type="term" value="P:pyrimidine nucleobase biosynthetic process"/>
    <property type="evidence" value="ECO:0007669"/>
    <property type="project" value="TreeGrafter"/>
</dbReference>
<dbReference type="CDD" id="cd03113">
    <property type="entry name" value="CTPS_N"/>
    <property type="match status" value="1"/>
</dbReference>
<dbReference type="CDD" id="cd01746">
    <property type="entry name" value="GATase1_CTP_Synthase"/>
    <property type="match status" value="1"/>
</dbReference>
<dbReference type="FunFam" id="3.40.50.300:FF:000009">
    <property type="entry name" value="CTP synthase"/>
    <property type="match status" value="1"/>
</dbReference>
<dbReference type="FunFam" id="3.40.50.880:FF:000002">
    <property type="entry name" value="CTP synthase"/>
    <property type="match status" value="1"/>
</dbReference>
<dbReference type="Gene3D" id="3.40.50.880">
    <property type="match status" value="1"/>
</dbReference>
<dbReference type="Gene3D" id="3.40.50.300">
    <property type="entry name" value="P-loop containing nucleotide triphosphate hydrolases"/>
    <property type="match status" value="1"/>
</dbReference>
<dbReference type="HAMAP" id="MF_01227">
    <property type="entry name" value="PyrG"/>
    <property type="match status" value="1"/>
</dbReference>
<dbReference type="InterPro" id="IPR029062">
    <property type="entry name" value="Class_I_gatase-like"/>
</dbReference>
<dbReference type="InterPro" id="IPR004468">
    <property type="entry name" value="CTP_synthase"/>
</dbReference>
<dbReference type="InterPro" id="IPR017456">
    <property type="entry name" value="CTP_synthase_N"/>
</dbReference>
<dbReference type="InterPro" id="IPR017926">
    <property type="entry name" value="GATASE"/>
</dbReference>
<dbReference type="InterPro" id="IPR033828">
    <property type="entry name" value="GATase1_CTP_Synthase"/>
</dbReference>
<dbReference type="InterPro" id="IPR027417">
    <property type="entry name" value="P-loop_NTPase"/>
</dbReference>
<dbReference type="NCBIfam" id="NF003792">
    <property type="entry name" value="PRK05380.1"/>
    <property type="match status" value="1"/>
</dbReference>
<dbReference type="NCBIfam" id="TIGR00337">
    <property type="entry name" value="PyrG"/>
    <property type="match status" value="1"/>
</dbReference>
<dbReference type="PANTHER" id="PTHR11550">
    <property type="entry name" value="CTP SYNTHASE"/>
    <property type="match status" value="1"/>
</dbReference>
<dbReference type="PANTHER" id="PTHR11550:SF0">
    <property type="entry name" value="CTP SYNTHASE-RELATED"/>
    <property type="match status" value="1"/>
</dbReference>
<dbReference type="Pfam" id="PF06418">
    <property type="entry name" value="CTP_synth_N"/>
    <property type="match status" value="1"/>
</dbReference>
<dbReference type="Pfam" id="PF00117">
    <property type="entry name" value="GATase"/>
    <property type="match status" value="1"/>
</dbReference>
<dbReference type="SUPFAM" id="SSF52317">
    <property type="entry name" value="Class I glutamine amidotransferase-like"/>
    <property type="match status" value="1"/>
</dbReference>
<dbReference type="SUPFAM" id="SSF52540">
    <property type="entry name" value="P-loop containing nucleoside triphosphate hydrolases"/>
    <property type="match status" value="1"/>
</dbReference>
<dbReference type="PROSITE" id="PS51273">
    <property type="entry name" value="GATASE_TYPE_1"/>
    <property type="match status" value="1"/>
</dbReference>